<keyword id="KW-0963">Cytoplasm</keyword>
<keyword id="KW-0378">Hydrolase</keyword>
<evidence type="ECO:0000255" key="1">
    <source>
        <dbReference type="HAMAP-Rule" id="MF_00628"/>
    </source>
</evidence>
<dbReference type="EC" id="3.1.1.29" evidence="1"/>
<dbReference type="EMBL" id="CP001404">
    <property type="protein sequence ID" value="ACP47956.1"/>
    <property type="molecule type" value="Genomic_DNA"/>
</dbReference>
<dbReference type="SMR" id="C3NF60"/>
<dbReference type="KEGG" id="sin:YN1551_0834"/>
<dbReference type="HOGENOM" id="CLU_073661_2_2_2"/>
<dbReference type="Proteomes" id="UP000006818">
    <property type="component" value="Chromosome"/>
</dbReference>
<dbReference type="GO" id="GO:0005829">
    <property type="term" value="C:cytosol"/>
    <property type="evidence" value="ECO:0007669"/>
    <property type="project" value="TreeGrafter"/>
</dbReference>
<dbReference type="GO" id="GO:0004045">
    <property type="term" value="F:peptidyl-tRNA hydrolase activity"/>
    <property type="evidence" value="ECO:0007669"/>
    <property type="project" value="UniProtKB-UniRule"/>
</dbReference>
<dbReference type="GO" id="GO:0006412">
    <property type="term" value="P:translation"/>
    <property type="evidence" value="ECO:0007669"/>
    <property type="project" value="UniProtKB-UniRule"/>
</dbReference>
<dbReference type="CDD" id="cd02430">
    <property type="entry name" value="PTH2"/>
    <property type="match status" value="1"/>
</dbReference>
<dbReference type="FunFam" id="3.40.1490.10:FF:000001">
    <property type="entry name" value="Peptidyl-tRNA hydrolase 2"/>
    <property type="match status" value="1"/>
</dbReference>
<dbReference type="Gene3D" id="3.40.1490.10">
    <property type="entry name" value="Bit1"/>
    <property type="match status" value="1"/>
</dbReference>
<dbReference type="HAMAP" id="MF_00628">
    <property type="entry name" value="Pept_tRNA_hydro_arch"/>
    <property type="match status" value="1"/>
</dbReference>
<dbReference type="InterPro" id="IPR023476">
    <property type="entry name" value="Pep_tRNA_hydro_II_dom_sf"/>
</dbReference>
<dbReference type="InterPro" id="IPR034759">
    <property type="entry name" value="Pept_tRNA_hydro_arch"/>
</dbReference>
<dbReference type="InterPro" id="IPR002833">
    <property type="entry name" value="PTH2"/>
</dbReference>
<dbReference type="NCBIfam" id="TIGR00283">
    <property type="entry name" value="arch_pth2"/>
    <property type="match status" value="1"/>
</dbReference>
<dbReference type="NCBIfam" id="NF003314">
    <property type="entry name" value="PRK04322.1"/>
    <property type="match status" value="1"/>
</dbReference>
<dbReference type="PANTHER" id="PTHR12649">
    <property type="entry name" value="PEPTIDYL-TRNA HYDROLASE 2"/>
    <property type="match status" value="1"/>
</dbReference>
<dbReference type="PANTHER" id="PTHR12649:SF11">
    <property type="entry name" value="PEPTIDYL-TRNA HYDROLASE 2, MITOCHONDRIAL"/>
    <property type="match status" value="1"/>
</dbReference>
<dbReference type="Pfam" id="PF01981">
    <property type="entry name" value="PTH2"/>
    <property type="match status" value="1"/>
</dbReference>
<dbReference type="SUPFAM" id="SSF102462">
    <property type="entry name" value="Peptidyl-tRNA hydrolase II"/>
    <property type="match status" value="1"/>
</dbReference>
<feature type="chain" id="PRO_1000212318" description="Peptidyl-tRNA hydrolase">
    <location>
        <begin position="1"/>
        <end position="120"/>
    </location>
</feature>
<reference key="1">
    <citation type="journal article" date="2009" name="Proc. Natl. Acad. Sci. U.S.A.">
        <title>Biogeography of the Sulfolobus islandicus pan-genome.</title>
        <authorList>
            <person name="Reno M.L."/>
            <person name="Held N.L."/>
            <person name="Fields C.J."/>
            <person name="Burke P.V."/>
            <person name="Whitaker R.J."/>
        </authorList>
    </citation>
    <scope>NUCLEOTIDE SEQUENCE [LARGE SCALE GENOMIC DNA]</scope>
    <source>
        <strain>Y.N.15.51 / Yellowstone #2</strain>
    </source>
</reference>
<proteinExistence type="inferred from homology"/>
<accession>C3NF60</accession>
<name>PTH_SACI1</name>
<comment type="function">
    <text evidence="1">The natural substrate for this enzyme may be peptidyl-tRNAs which drop off the ribosome during protein synthesis.</text>
</comment>
<comment type="catalytic activity">
    <reaction evidence="1">
        <text>an N-acyl-L-alpha-aminoacyl-tRNA + H2O = an N-acyl-L-amino acid + a tRNA + H(+)</text>
        <dbReference type="Rhea" id="RHEA:54448"/>
        <dbReference type="Rhea" id="RHEA-COMP:10123"/>
        <dbReference type="Rhea" id="RHEA-COMP:13883"/>
        <dbReference type="ChEBI" id="CHEBI:15377"/>
        <dbReference type="ChEBI" id="CHEBI:15378"/>
        <dbReference type="ChEBI" id="CHEBI:59874"/>
        <dbReference type="ChEBI" id="CHEBI:78442"/>
        <dbReference type="ChEBI" id="CHEBI:138191"/>
        <dbReference type="EC" id="3.1.1.29"/>
    </reaction>
</comment>
<comment type="subcellular location">
    <subcellularLocation>
        <location evidence="1">Cytoplasm</location>
    </subcellularLocation>
</comment>
<comment type="similarity">
    <text evidence="1">Belongs to the PTH2 family.</text>
</comment>
<organism>
    <name type="scientific">Saccharolobus islandicus (strain Y.N.15.51 / Yellowstone #2)</name>
    <name type="common">Sulfolobus islandicus</name>
    <dbReference type="NCBI Taxonomy" id="419942"/>
    <lineage>
        <taxon>Archaea</taxon>
        <taxon>Thermoproteota</taxon>
        <taxon>Thermoprotei</taxon>
        <taxon>Sulfolobales</taxon>
        <taxon>Sulfolobaceae</taxon>
        <taxon>Saccharolobus</taxon>
    </lineage>
</organism>
<sequence length="120" mass="13147">MVKMVIVVRSDIKMGKGKMAAQVAHAAVTLVISIINSNNSRWKEWLNEWLQQGQPKIVVKANSLDEIILRSKKAETMNLPFSIIEDAGKTQLEPGTITCLGIGPAPENLIDPITGDLKLL</sequence>
<gene>
    <name evidence="1" type="primary">pth</name>
    <name type="ordered locus">YN1551_0834</name>
</gene>
<protein>
    <recommendedName>
        <fullName evidence="1">Peptidyl-tRNA hydrolase</fullName>
        <shortName evidence="1">PTH</shortName>
        <ecNumber evidence="1">3.1.1.29</ecNumber>
    </recommendedName>
</protein>